<keyword id="KW-0028">Amino-acid biosynthesis</keyword>
<keyword id="KW-0055">Arginine biosynthesis</keyword>
<keyword id="KW-0067">ATP-binding</keyword>
<keyword id="KW-0963">Cytoplasm</keyword>
<keyword id="KW-0436">Ligase</keyword>
<keyword id="KW-0547">Nucleotide-binding</keyword>
<keyword id="KW-1185">Reference proteome</keyword>
<sequence length="399" mass="43969">MSERVILAYSGGLDTSVAISWIGKETGKEVVAVAIDLGQGGEDMEVVRQRALDCGAVEAVVVDARDEFAEEYCLPTIQSNALYMDRYPLVSAISRPLIVKHLVKAAREHGGGVVAHGCTGKGNDQVRFEVGFASLAPDLQVLAPVRDYAWTREKAIAFAEENAIPINVTKRSPFSIDQNVWGRAVETGFLEHLWNAPTKDVYDYTEDPTVHWNTPDEVVIGFDKGVPVSIDGRPVSVLQAIEELNRRAGAQGVGRLDVVEDRLVGIKSREIYEAPGAMVLITAHTELEHVTLERELGRFKRHTDQKWGELVYDGLWYSPLKRALESFVAHTQEHVSGEIRLVLHGGHISVNGRRSAESLYDFNLATYDEGDSFDQSAAKGFVHLHGLSSRISAKRDLGI</sequence>
<reference key="1">
    <citation type="submission" date="2006-10" db="EMBL/GenBank/DDBJ databases">
        <authorList>
            <person name="Fleischmann R.D."/>
            <person name="Dodson R.J."/>
            <person name="Haft D.H."/>
            <person name="Merkel J.S."/>
            <person name="Nelson W.C."/>
            <person name="Fraser C.M."/>
        </authorList>
    </citation>
    <scope>NUCLEOTIDE SEQUENCE [LARGE SCALE GENOMIC DNA]</scope>
    <source>
        <strain>ATCC 700084 / mc(2)155</strain>
    </source>
</reference>
<reference key="2">
    <citation type="journal article" date="2007" name="Genome Biol.">
        <title>Interrupted coding sequences in Mycobacterium smegmatis: authentic mutations or sequencing errors?</title>
        <authorList>
            <person name="Deshayes C."/>
            <person name="Perrodou E."/>
            <person name="Gallien S."/>
            <person name="Euphrasie D."/>
            <person name="Schaeffer C."/>
            <person name="Van-Dorsselaer A."/>
            <person name="Poch O."/>
            <person name="Lecompte O."/>
            <person name="Reyrat J.-M."/>
        </authorList>
    </citation>
    <scope>NUCLEOTIDE SEQUENCE [LARGE SCALE GENOMIC DNA]</scope>
    <source>
        <strain>ATCC 700084 / mc(2)155</strain>
    </source>
</reference>
<reference key="3">
    <citation type="journal article" date="2009" name="Genome Res.">
        <title>Ortho-proteogenomics: multiple proteomes investigation through orthology and a new MS-based protocol.</title>
        <authorList>
            <person name="Gallien S."/>
            <person name="Perrodou E."/>
            <person name="Carapito C."/>
            <person name="Deshayes C."/>
            <person name="Reyrat J.-M."/>
            <person name="Van Dorsselaer A."/>
            <person name="Poch O."/>
            <person name="Schaeffer C."/>
            <person name="Lecompte O."/>
        </authorList>
    </citation>
    <scope>NUCLEOTIDE SEQUENCE [LARGE SCALE GENOMIC DNA]</scope>
    <source>
        <strain>ATCC 700084 / mc(2)155</strain>
    </source>
</reference>
<accession>A0QYS6</accession>
<accession>I7FF97</accession>
<dbReference type="EC" id="6.3.4.5" evidence="1"/>
<dbReference type="EMBL" id="CP000480">
    <property type="protein sequence ID" value="ABK71007.1"/>
    <property type="molecule type" value="Genomic_DNA"/>
</dbReference>
<dbReference type="EMBL" id="CP001663">
    <property type="protein sequence ID" value="AFP40140.1"/>
    <property type="molecule type" value="Genomic_DNA"/>
</dbReference>
<dbReference type="RefSeq" id="WP_011729313.1">
    <property type="nucleotide sequence ID" value="NZ_SIJM01000005.1"/>
</dbReference>
<dbReference type="RefSeq" id="YP_888064.1">
    <property type="nucleotide sequence ID" value="NC_008596.1"/>
</dbReference>
<dbReference type="SMR" id="A0QYS6"/>
<dbReference type="STRING" id="246196.MSMEG_3770"/>
<dbReference type="PaxDb" id="246196-MSMEI_3681"/>
<dbReference type="KEGG" id="msb:LJ00_18730"/>
<dbReference type="KEGG" id="msg:MSMEI_3681"/>
<dbReference type="KEGG" id="msm:MSMEG_3770"/>
<dbReference type="PATRIC" id="fig|246196.19.peg.3709"/>
<dbReference type="eggNOG" id="COG0137">
    <property type="taxonomic scope" value="Bacteria"/>
</dbReference>
<dbReference type="OrthoDB" id="9801641at2"/>
<dbReference type="UniPathway" id="UPA00068">
    <property type="reaction ID" value="UER00113"/>
</dbReference>
<dbReference type="Proteomes" id="UP000000757">
    <property type="component" value="Chromosome"/>
</dbReference>
<dbReference type="Proteomes" id="UP000006158">
    <property type="component" value="Chromosome"/>
</dbReference>
<dbReference type="GO" id="GO:0005737">
    <property type="term" value="C:cytoplasm"/>
    <property type="evidence" value="ECO:0007669"/>
    <property type="project" value="UniProtKB-SubCell"/>
</dbReference>
<dbReference type="GO" id="GO:0004055">
    <property type="term" value="F:argininosuccinate synthase activity"/>
    <property type="evidence" value="ECO:0007669"/>
    <property type="project" value="UniProtKB-UniRule"/>
</dbReference>
<dbReference type="GO" id="GO:0005524">
    <property type="term" value="F:ATP binding"/>
    <property type="evidence" value="ECO:0007669"/>
    <property type="project" value="UniProtKB-UniRule"/>
</dbReference>
<dbReference type="GO" id="GO:0000053">
    <property type="term" value="P:argininosuccinate metabolic process"/>
    <property type="evidence" value="ECO:0007669"/>
    <property type="project" value="TreeGrafter"/>
</dbReference>
<dbReference type="GO" id="GO:0006526">
    <property type="term" value="P:L-arginine biosynthetic process"/>
    <property type="evidence" value="ECO:0007669"/>
    <property type="project" value="UniProtKB-UniRule"/>
</dbReference>
<dbReference type="GO" id="GO:0000050">
    <property type="term" value="P:urea cycle"/>
    <property type="evidence" value="ECO:0007669"/>
    <property type="project" value="TreeGrafter"/>
</dbReference>
<dbReference type="CDD" id="cd01999">
    <property type="entry name" value="ASS"/>
    <property type="match status" value="1"/>
</dbReference>
<dbReference type="FunFam" id="3.40.50.620:FF:000038">
    <property type="entry name" value="Argininosuccinate synthase"/>
    <property type="match status" value="1"/>
</dbReference>
<dbReference type="FunFam" id="3.90.1260.10:FF:000007">
    <property type="entry name" value="Argininosuccinate synthase"/>
    <property type="match status" value="1"/>
</dbReference>
<dbReference type="Gene3D" id="3.90.1260.10">
    <property type="entry name" value="Argininosuccinate synthetase, chain A, domain 2"/>
    <property type="match status" value="1"/>
</dbReference>
<dbReference type="Gene3D" id="3.40.50.620">
    <property type="entry name" value="HUPs"/>
    <property type="match status" value="1"/>
</dbReference>
<dbReference type="Gene3D" id="1.20.5.470">
    <property type="entry name" value="Single helix bin"/>
    <property type="match status" value="1"/>
</dbReference>
<dbReference type="HAMAP" id="MF_00005">
    <property type="entry name" value="Arg_succ_synth_type1"/>
    <property type="match status" value="1"/>
</dbReference>
<dbReference type="InterPro" id="IPR048268">
    <property type="entry name" value="Arginosuc_syn_C"/>
</dbReference>
<dbReference type="InterPro" id="IPR048267">
    <property type="entry name" value="Arginosuc_syn_N"/>
</dbReference>
<dbReference type="InterPro" id="IPR001518">
    <property type="entry name" value="Arginosuc_synth"/>
</dbReference>
<dbReference type="InterPro" id="IPR018223">
    <property type="entry name" value="Arginosuc_synth_CS"/>
</dbReference>
<dbReference type="InterPro" id="IPR023434">
    <property type="entry name" value="Arginosuc_synth_type_1_subfam"/>
</dbReference>
<dbReference type="InterPro" id="IPR024074">
    <property type="entry name" value="AS_cat/multimer_dom_body"/>
</dbReference>
<dbReference type="InterPro" id="IPR014729">
    <property type="entry name" value="Rossmann-like_a/b/a_fold"/>
</dbReference>
<dbReference type="NCBIfam" id="TIGR00032">
    <property type="entry name" value="argG"/>
    <property type="match status" value="1"/>
</dbReference>
<dbReference type="NCBIfam" id="NF001770">
    <property type="entry name" value="PRK00509.1"/>
    <property type="match status" value="1"/>
</dbReference>
<dbReference type="PANTHER" id="PTHR11587">
    <property type="entry name" value="ARGININOSUCCINATE SYNTHASE"/>
    <property type="match status" value="1"/>
</dbReference>
<dbReference type="PANTHER" id="PTHR11587:SF2">
    <property type="entry name" value="ARGININOSUCCINATE SYNTHASE"/>
    <property type="match status" value="1"/>
</dbReference>
<dbReference type="Pfam" id="PF20979">
    <property type="entry name" value="Arginosuc_syn_C"/>
    <property type="match status" value="1"/>
</dbReference>
<dbReference type="Pfam" id="PF00764">
    <property type="entry name" value="Arginosuc_synth"/>
    <property type="match status" value="1"/>
</dbReference>
<dbReference type="SUPFAM" id="SSF52402">
    <property type="entry name" value="Adenine nucleotide alpha hydrolases-like"/>
    <property type="match status" value="1"/>
</dbReference>
<dbReference type="SUPFAM" id="SSF69864">
    <property type="entry name" value="Argininosuccinate synthetase, C-terminal domain"/>
    <property type="match status" value="1"/>
</dbReference>
<dbReference type="PROSITE" id="PS00564">
    <property type="entry name" value="ARGININOSUCCIN_SYN_1"/>
    <property type="match status" value="1"/>
</dbReference>
<dbReference type="PROSITE" id="PS00565">
    <property type="entry name" value="ARGININOSUCCIN_SYN_2"/>
    <property type="match status" value="1"/>
</dbReference>
<name>ASSY_MYCS2</name>
<feature type="chain" id="PRO_1000000408" description="Argininosuccinate synthase">
    <location>
        <begin position="1"/>
        <end position="399"/>
    </location>
</feature>
<feature type="binding site" evidence="1">
    <location>
        <begin position="8"/>
        <end position="16"/>
    </location>
    <ligand>
        <name>ATP</name>
        <dbReference type="ChEBI" id="CHEBI:30616"/>
    </ligand>
</feature>
<feature type="binding site" evidence="1">
    <location>
        <position position="87"/>
    </location>
    <ligand>
        <name>L-citrulline</name>
        <dbReference type="ChEBI" id="CHEBI:57743"/>
    </ligand>
</feature>
<feature type="binding site" evidence="1">
    <location>
        <position position="117"/>
    </location>
    <ligand>
        <name>ATP</name>
        <dbReference type="ChEBI" id="CHEBI:30616"/>
    </ligand>
</feature>
<feature type="binding site" evidence="1">
    <location>
        <position position="119"/>
    </location>
    <ligand>
        <name>L-aspartate</name>
        <dbReference type="ChEBI" id="CHEBI:29991"/>
    </ligand>
</feature>
<feature type="binding site" evidence="1">
    <location>
        <position position="123"/>
    </location>
    <ligand>
        <name>L-aspartate</name>
        <dbReference type="ChEBI" id="CHEBI:29991"/>
    </ligand>
</feature>
<feature type="binding site" evidence="1">
    <location>
        <position position="123"/>
    </location>
    <ligand>
        <name>L-citrulline</name>
        <dbReference type="ChEBI" id="CHEBI:57743"/>
    </ligand>
</feature>
<feature type="binding site" evidence="1">
    <location>
        <position position="124"/>
    </location>
    <ligand>
        <name>L-aspartate</name>
        <dbReference type="ChEBI" id="CHEBI:29991"/>
    </ligand>
</feature>
<feature type="binding site" evidence="1">
    <location>
        <position position="127"/>
    </location>
    <ligand>
        <name>L-citrulline</name>
        <dbReference type="ChEBI" id="CHEBI:57743"/>
    </ligand>
</feature>
<feature type="binding site" evidence="1">
    <location>
        <position position="175"/>
    </location>
    <ligand>
        <name>L-citrulline</name>
        <dbReference type="ChEBI" id="CHEBI:57743"/>
    </ligand>
</feature>
<feature type="binding site" evidence="1">
    <location>
        <position position="260"/>
    </location>
    <ligand>
        <name>L-citrulline</name>
        <dbReference type="ChEBI" id="CHEBI:57743"/>
    </ligand>
</feature>
<feature type="binding site" evidence="1">
    <location>
        <position position="272"/>
    </location>
    <ligand>
        <name>L-citrulline</name>
        <dbReference type="ChEBI" id="CHEBI:57743"/>
    </ligand>
</feature>
<evidence type="ECO:0000255" key="1">
    <source>
        <dbReference type="HAMAP-Rule" id="MF_00005"/>
    </source>
</evidence>
<organism>
    <name type="scientific">Mycolicibacterium smegmatis (strain ATCC 700084 / mc(2)155)</name>
    <name type="common">Mycobacterium smegmatis</name>
    <dbReference type="NCBI Taxonomy" id="246196"/>
    <lineage>
        <taxon>Bacteria</taxon>
        <taxon>Bacillati</taxon>
        <taxon>Actinomycetota</taxon>
        <taxon>Actinomycetes</taxon>
        <taxon>Mycobacteriales</taxon>
        <taxon>Mycobacteriaceae</taxon>
        <taxon>Mycolicibacterium</taxon>
    </lineage>
</organism>
<proteinExistence type="inferred from homology"/>
<protein>
    <recommendedName>
        <fullName evidence="1">Argininosuccinate synthase</fullName>
        <ecNumber evidence="1">6.3.4.5</ecNumber>
    </recommendedName>
    <alternativeName>
        <fullName evidence="1">Citrulline--aspartate ligase</fullName>
    </alternativeName>
</protein>
<gene>
    <name evidence="1" type="primary">argG</name>
    <name type="ordered locus">MSMEG_3770</name>
    <name type="ordered locus">MSMEI_3681</name>
</gene>
<comment type="catalytic activity">
    <reaction evidence="1">
        <text>L-citrulline + L-aspartate + ATP = 2-(N(omega)-L-arginino)succinate + AMP + diphosphate + H(+)</text>
        <dbReference type="Rhea" id="RHEA:10932"/>
        <dbReference type="ChEBI" id="CHEBI:15378"/>
        <dbReference type="ChEBI" id="CHEBI:29991"/>
        <dbReference type="ChEBI" id="CHEBI:30616"/>
        <dbReference type="ChEBI" id="CHEBI:33019"/>
        <dbReference type="ChEBI" id="CHEBI:57472"/>
        <dbReference type="ChEBI" id="CHEBI:57743"/>
        <dbReference type="ChEBI" id="CHEBI:456215"/>
        <dbReference type="EC" id="6.3.4.5"/>
    </reaction>
</comment>
<comment type="pathway">
    <text evidence="1">Amino-acid biosynthesis; L-arginine biosynthesis; L-arginine from L-ornithine and carbamoyl phosphate: step 2/3.</text>
</comment>
<comment type="subunit">
    <text evidence="1">Homotetramer.</text>
</comment>
<comment type="subcellular location">
    <subcellularLocation>
        <location evidence="1">Cytoplasm</location>
    </subcellularLocation>
</comment>
<comment type="similarity">
    <text evidence="1">Belongs to the argininosuccinate synthase family. Type 1 subfamily.</text>
</comment>